<feature type="chain" id="PRO_0000062768" description="Cell shape-determining protein MreC">
    <location>
        <begin position="1"/>
        <end position="351"/>
    </location>
</feature>
<feature type="region of interest" description="Disordered" evidence="2">
    <location>
        <begin position="318"/>
        <end position="351"/>
    </location>
</feature>
<keyword id="KW-0133">Cell shape</keyword>
<keyword id="KW-1185">Reference proteome</keyword>
<evidence type="ECO:0000250" key="1"/>
<evidence type="ECO:0000256" key="2">
    <source>
        <dbReference type="SAM" id="MobiDB-lite"/>
    </source>
</evidence>
<evidence type="ECO:0000305" key="3"/>
<sequence>MKPIFGKAPPLGIRLLIAIFASIALILADGRNSSITKARSAMETAIGGLYYLANSPRSILDGISENLVDTNKLQIENKVLRQQLLEKNADLLLLDQLKVENQRLRLLLNSPLRTDEYKKIAEVLTAETDIYRQQIVINQGKKDGAYVGQPVIDEKGVIGQIISVGENTSRVLLLTDVTHSIPVQVLRNDVRVIASGTGHTDELSLDNVPRSVDIEKGDLLVTSGLGGRFLEGYPVAVVQSVSRDSSNYFAIVKAKPLALLERLRYVLLLWPSNLDISKVKSISPEEVRNLVQKRLESQANEANYRVKKTPLTEKDFLENEEKTIIEPDIPTDFLQNEEDLPIEQQEERIED</sequence>
<organism>
    <name type="scientific">Haemophilus influenzae (strain ATCC 51907 / DSM 11121 / KW20 / Rd)</name>
    <dbReference type="NCBI Taxonomy" id="71421"/>
    <lineage>
        <taxon>Bacteria</taxon>
        <taxon>Pseudomonadati</taxon>
        <taxon>Pseudomonadota</taxon>
        <taxon>Gammaproteobacteria</taxon>
        <taxon>Pasteurellales</taxon>
        <taxon>Pasteurellaceae</taxon>
        <taxon>Haemophilus</taxon>
    </lineage>
</organism>
<reference key="1">
    <citation type="journal article" date="1995" name="Science">
        <title>Whole-genome random sequencing and assembly of Haemophilus influenzae Rd.</title>
        <authorList>
            <person name="Fleischmann R.D."/>
            <person name="Adams M.D."/>
            <person name="White O."/>
            <person name="Clayton R.A."/>
            <person name="Kirkness E.F."/>
            <person name="Kerlavage A.R."/>
            <person name="Bult C.J."/>
            <person name="Tomb J.-F."/>
            <person name="Dougherty B.A."/>
            <person name="Merrick J.M."/>
            <person name="McKenney K."/>
            <person name="Sutton G.G."/>
            <person name="FitzHugh W."/>
            <person name="Fields C.A."/>
            <person name="Gocayne J.D."/>
            <person name="Scott J.D."/>
            <person name="Shirley R."/>
            <person name="Liu L.-I."/>
            <person name="Glodek A."/>
            <person name="Kelley J.M."/>
            <person name="Weidman J.F."/>
            <person name="Phillips C.A."/>
            <person name="Spriggs T."/>
            <person name="Hedblom E."/>
            <person name="Cotton M.D."/>
            <person name="Utterback T.R."/>
            <person name="Hanna M.C."/>
            <person name="Nguyen D.T."/>
            <person name="Saudek D.M."/>
            <person name="Brandon R.C."/>
            <person name="Fine L.D."/>
            <person name="Fritchman J.L."/>
            <person name="Fuhrmann J.L."/>
            <person name="Geoghagen N.S.M."/>
            <person name="Gnehm C.L."/>
            <person name="McDonald L.A."/>
            <person name="Small K.V."/>
            <person name="Fraser C.M."/>
            <person name="Smith H.O."/>
            <person name="Venter J.C."/>
        </authorList>
    </citation>
    <scope>NUCLEOTIDE SEQUENCE [LARGE SCALE GENOMIC DNA]</scope>
    <source>
        <strain>ATCC 51907 / DSM 11121 / KW20 / Rd</strain>
    </source>
</reference>
<gene>
    <name type="primary">mreC</name>
    <name type="ordered locus">HI_0038</name>
</gene>
<protein>
    <recommendedName>
        <fullName>Cell shape-determining protein MreC</fullName>
    </recommendedName>
    <alternativeName>
        <fullName>Cell shape protein MreC</fullName>
    </alternativeName>
    <alternativeName>
        <fullName>Rod shape-determining protein MreC</fullName>
    </alternativeName>
</protein>
<name>MREC_HAEIN</name>
<proteinExistence type="inferred from homology"/>
<comment type="function">
    <text evidence="1">Involved in formation and maintenance of cell shape.</text>
</comment>
<comment type="similarity">
    <text evidence="3">Belongs to the MreC family.</text>
</comment>
<dbReference type="EMBL" id="L42023">
    <property type="protein sequence ID" value="AAC21716.1"/>
    <property type="molecule type" value="Genomic_DNA"/>
</dbReference>
<dbReference type="PIR" id="F64044">
    <property type="entry name" value="F64044"/>
</dbReference>
<dbReference type="RefSeq" id="NP_438211.1">
    <property type="nucleotide sequence ID" value="NC_000907.1"/>
</dbReference>
<dbReference type="SMR" id="P44475"/>
<dbReference type="STRING" id="71421.HI_0038"/>
<dbReference type="EnsemblBacteria" id="AAC21716">
    <property type="protein sequence ID" value="AAC21716"/>
    <property type="gene ID" value="HI_0038"/>
</dbReference>
<dbReference type="KEGG" id="hin:HI_0038"/>
<dbReference type="PATRIC" id="fig|71421.8.peg.38"/>
<dbReference type="eggNOG" id="COG1792">
    <property type="taxonomic scope" value="Bacteria"/>
</dbReference>
<dbReference type="HOGENOM" id="CLU_042663_2_0_6"/>
<dbReference type="OrthoDB" id="9808025at2"/>
<dbReference type="PhylomeDB" id="P44475"/>
<dbReference type="BioCyc" id="HINF71421:G1GJ1-38-MONOMER"/>
<dbReference type="Proteomes" id="UP000000579">
    <property type="component" value="Chromosome"/>
</dbReference>
<dbReference type="GO" id="GO:0005886">
    <property type="term" value="C:plasma membrane"/>
    <property type="evidence" value="ECO:0000318"/>
    <property type="project" value="GO_Central"/>
</dbReference>
<dbReference type="GO" id="GO:0008360">
    <property type="term" value="P:regulation of cell shape"/>
    <property type="evidence" value="ECO:0000318"/>
    <property type="project" value="GO_Central"/>
</dbReference>
<dbReference type="FunFam" id="2.40.10.340:FF:000001">
    <property type="entry name" value="Cell shape-determining protein MreC"/>
    <property type="match status" value="1"/>
</dbReference>
<dbReference type="FunFam" id="2.40.10.350:FF:000002">
    <property type="entry name" value="Cell shape-determining protein MreC"/>
    <property type="match status" value="1"/>
</dbReference>
<dbReference type="Gene3D" id="2.40.10.340">
    <property type="entry name" value="Rod shape-determining protein MreC, domain 1"/>
    <property type="match status" value="1"/>
</dbReference>
<dbReference type="Gene3D" id="2.40.10.350">
    <property type="entry name" value="Rod shape-determining protein MreC, domain 2"/>
    <property type="match status" value="1"/>
</dbReference>
<dbReference type="InterPro" id="IPR042177">
    <property type="entry name" value="Cell/Rod_1"/>
</dbReference>
<dbReference type="InterPro" id="IPR042175">
    <property type="entry name" value="Cell/Rod_MreC_2"/>
</dbReference>
<dbReference type="InterPro" id="IPR007221">
    <property type="entry name" value="MreC"/>
</dbReference>
<dbReference type="InterPro" id="IPR055342">
    <property type="entry name" value="MreC_beta-barrel_core"/>
</dbReference>
<dbReference type="NCBIfam" id="TIGR00219">
    <property type="entry name" value="mreC"/>
    <property type="match status" value="1"/>
</dbReference>
<dbReference type="PANTHER" id="PTHR34138">
    <property type="entry name" value="CELL SHAPE-DETERMINING PROTEIN MREC"/>
    <property type="match status" value="1"/>
</dbReference>
<dbReference type="PANTHER" id="PTHR34138:SF1">
    <property type="entry name" value="CELL SHAPE-DETERMINING PROTEIN MREC"/>
    <property type="match status" value="1"/>
</dbReference>
<dbReference type="Pfam" id="PF04085">
    <property type="entry name" value="MreC"/>
    <property type="match status" value="1"/>
</dbReference>
<accession>P44475</accession>